<keyword id="KW-0963">Cytoplasm</keyword>
<keyword id="KW-0342">GTP-binding</keyword>
<keyword id="KW-0460">Magnesium</keyword>
<keyword id="KW-0479">Metal-binding</keyword>
<keyword id="KW-0501">Molybdenum cofactor biosynthesis</keyword>
<keyword id="KW-0547">Nucleotide-binding</keyword>
<keyword id="KW-1185">Reference proteome</keyword>
<keyword id="KW-0808">Transferase</keyword>
<protein>
    <recommendedName>
        <fullName evidence="1">Probable molybdenum cofactor guanylyltransferase</fullName>
        <shortName evidence="1">MoCo guanylyltransferase</shortName>
        <ecNumber evidence="1">2.7.7.77</ecNumber>
    </recommendedName>
    <alternativeName>
        <fullName evidence="1">GTP:molybdopterin guanylyltransferase</fullName>
    </alternativeName>
    <alternativeName>
        <fullName evidence="1">Mo-MPT guanylyltransferase</fullName>
    </alternativeName>
    <alternativeName>
        <fullName evidence="1">Molybdopterin guanylyltransferase</fullName>
    </alternativeName>
    <alternativeName>
        <fullName evidence="1">Molybdopterin-guanine dinucleotide synthase</fullName>
        <shortName evidence="1">MGD synthase</shortName>
    </alternativeName>
</protein>
<evidence type="ECO:0000255" key="1">
    <source>
        <dbReference type="HAMAP-Rule" id="MF_00316"/>
    </source>
</evidence>
<feature type="chain" id="PRO_1000205080" description="Probable molybdenum cofactor guanylyltransferase">
    <location>
        <begin position="1"/>
        <end position="195"/>
    </location>
</feature>
<feature type="binding site" evidence="1">
    <location>
        <begin position="6"/>
        <end position="8"/>
    </location>
    <ligand>
        <name>GTP</name>
        <dbReference type="ChEBI" id="CHEBI:37565"/>
    </ligand>
</feature>
<feature type="binding site" evidence="1">
    <location>
        <position position="18"/>
    </location>
    <ligand>
        <name>GTP</name>
        <dbReference type="ChEBI" id="CHEBI:37565"/>
    </ligand>
</feature>
<feature type="binding site" evidence="1">
    <location>
        <position position="67"/>
    </location>
    <ligand>
        <name>GTP</name>
        <dbReference type="ChEBI" id="CHEBI:37565"/>
    </ligand>
</feature>
<feature type="binding site" evidence="1">
    <location>
        <position position="93"/>
    </location>
    <ligand>
        <name>GTP</name>
        <dbReference type="ChEBI" id="CHEBI:37565"/>
    </ligand>
</feature>
<feature type="binding site" evidence="1">
    <location>
        <position position="93"/>
    </location>
    <ligand>
        <name>Mg(2+)</name>
        <dbReference type="ChEBI" id="CHEBI:18420"/>
    </ligand>
</feature>
<organism>
    <name type="scientific">Thermococcus sibiricus (strain DSM 12597 / MM 739)</name>
    <dbReference type="NCBI Taxonomy" id="604354"/>
    <lineage>
        <taxon>Archaea</taxon>
        <taxon>Methanobacteriati</taxon>
        <taxon>Methanobacteriota</taxon>
        <taxon>Thermococci</taxon>
        <taxon>Thermococcales</taxon>
        <taxon>Thermococcaceae</taxon>
        <taxon>Thermococcus</taxon>
    </lineage>
</organism>
<dbReference type="EC" id="2.7.7.77" evidence="1"/>
<dbReference type="EMBL" id="CP001463">
    <property type="protein sequence ID" value="ACS89892.1"/>
    <property type="molecule type" value="Genomic_DNA"/>
</dbReference>
<dbReference type="RefSeq" id="WP_015849112.1">
    <property type="nucleotide sequence ID" value="NC_012883.1"/>
</dbReference>
<dbReference type="SMR" id="C6A2P7"/>
<dbReference type="STRING" id="604354.TSIB_0831"/>
<dbReference type="GeneID" id="8095822"/>
<dbReference type="KEGG" id="tsi:TSIB_0831"/>
<dbReference type="eggNOG" id="arCOG01872">
    <property type="taxonomic scope" value="Archaea"/>
</dbReference>
<dbReference type="HOGENOM" id="CLU_055597_2_2_2"/>
<dbReference type="OrthoDB" id="28434at2157"/>
<dbReference type="Proteomes" id="UP000009079">
    <property type="component" value="Chromosome"/>
</dbReference>
<dbReference type="GO" id="GO:0005737">
    <property type="term" value="C:cytoplasm"/>
    <property type="evidence" value="ECO:0007669"/>
    <property type="project" value="UniProtKB-SubCell"/>
</dbReference>
<dbReference type="GO" id="GO:0005525">
    <property type="term" value="F:GTP binding"/>
    <property type="evidence" value="ECO:0007669"/>
    <property type="project" value="UniProtKB-UniRule"/>
</dbReference>
<dbReference type="GO" id="GO:0046872">
    <property type="term" value="F:metal ion binding"/>
    <property type="evidence" value="ECO:0007669"/>
    <property type="project" value="UniProtKB-KW"/>
</dbReference>
<dbReference type="GO" id="GO:0061603">
    <property type="term" value="F:molybdenum cofactor guanylyltransferase activity"/>
    <property type="evidence" value="ECO:0007669"/>
    <property type="project" value="UniProtKB-EC"/>
</dbReference>
<dbReference type="GO" id="GO:0006777">
    <property type="term" value="P:Mo-molybdopterin cofactor biosynthetic process"/>
    <property type="evidence" value="ECO:0007669"/>
    <property type="project" value="UniProtKB-KW"/>
</dbReference>
<dbReference type="CDD" id="cd02503">
    <property type="entry name" value="MobA"/>
    <property type="match status" value="1"/>
</dbReference>
<dbReference type="Gene3D" id="3.90.550.10">
    <property type="entry name" value="Spore Coat Polysaccharide Biosynthesis Protein SpsA, Chain A"/>
    <property type="match status" value="1"/>
</dbReference>
<dbReference type="HAMAP" id="MF_00316">
    <property type="entry name" value="MobA"/>
    <property type="match status" value="1"/>
</dbReference>
<dbReference type="InterPro" id="IPR025877">
    <property type="entry name" value="MobA-like_NTP_Trfase"/>
</dbReference>
<dbReference type="InterPro" id="IPR013482">
    <property type="entry name" value="Molybde_CF_guanTrfase"/>
</dbReference>
<dbReference type="InterPro" id="IPR029044">
    <property type="entry name" value="Nucleotide-diphossugar_trans"/>
</dbReference>
<dbReference type="NCBIfam" id="NF001457">
    <property type="entry name" value="PRK00317.1-3"/>
    <property type="match status" value="1"/>
</dbReference>
<dbReference type="PANTHER" id="PTHR19136">
    <property type="entry name" value="MOLYBDENUM COFACTOR GUANYLYLTRANSFERASE"/>
    <property type="match status" value="1"/>
</dbReference>
<dbReference type="PANTHER" id="PTHR19136:SF81">
    <property type="entry name" value="MOLYBDENUM COFACTOR GUANYLYLTRANSFERASE"/>
    <property type="match status" value="1"/>
</dbReference>
<dbReference type="Pfam" id="PF12804">
    <property type="entry name" value="NTP_transf_3"/>
    <property type="match status" value="1"/>
</dbReference>
<dbReference type="SUPFAM" id="SSF53448">
    <property type="entry name" value="Nucleotide-diphospho-sugar transferases"/>
    <property type="match status" value="1"/>
</dbReference>
<comment type="function">
    <text evidence="1">Transfers a GMP moiety from GTP to Mo-molybdopterin (Mo-MPT) cofactor (Moco or molybdenum cofactor) to form Mo-molybdopterin guanine dinucleotide (Mo-MGD) cofactor.</text>
</comment>
<comment type="catalytic activity">
    <reaction evidence="1">
        <text>Mo-molybdopterin + GTP + H(+) = Mo-molybdopterin guanine dinucleotide + diphosphate</text>
        <dbReference type="Rhea" id="RHEA:34243"/>
        <dbReference type="ChEBI" id="CHEBI:15378"/>
        <dbReference type="ChEBI" id="CHEBI:33019"/>
        <dbReference type="ChEBI" id="CHEBI:37565"/>
        <dbReference type="ChEBI" id="CHEBI:71302"/>
        <dbReference type="ChEBI" id="CHEBI:71310"/>
        <dbReference type="EC" id="2.7.7.77"/>
    </reaction>
</comment>
<comment type="cofactor">
    <cofactor evidence="1">
        <name>Mg(2+)</name>
        <dbReference type="ChEBI" id="CHEBI:18420"/>
    </cofactor>
</comment>
<comment type="subcellular location">
    <subcellularLocation>
        <location evidence="1">Cytoplasm</location>
    </subcellularLocation>
</comment>
<comment type="domain">
    <text evidence="1">The N-terminal domain determines nucleotide recognition and specific binding, while the C-terminal domain determines the specific binding to the target protein.</text>
</comment>
<comment type="similarity">
    <text evidence="1">Belongs to the MobA family.</text>
</comment>
<accession>C6A2P7</accession>
<gene>
    <name evidence="1" type="primary">mobA</name>
    <name type="ordered locus">TSIB_0831</name>
</gene>
<name>MOBA_THESM</name>
<proteinExistence type="inferred from homology"/>
<sequence length="195" mass="21867">MIGVVLAGGKSSRFGGEKLLYKINGKPLILHTIERVLNAKKIEEIVIVTSKEKMKSFEKLGFSVVVDKLKIGPIGGVYTAISHFADVFVVAGDMPLINPKFVDWIVEKFHESNTLVCVPKWKNGYLEPLHAAYSQDFLEMIKRQIEKGEYMLGKAIRASSPCYIKIESLPLEWQESLFNINAKSDLKKIKGALQV</sequence>
<reference key="1">
    <citation type="journal article" date="2009" name="Appl. Environ. Microbiol.">
        <title>Metabolic versatility and indigenous origin of the archaeon Thermococcus sibiricus, isolated from a siberian oil reservoir, as revealed by genome analysis.</title>
        <authorList>
            <person name="Mardanov A.V."/>
            <person name="Ravin N.V."/>
            <person name="Svetlitchnyi V.A."/>
            <person name="Beletsky A.V."/>
            <person name="Miroshnichenko M.L."/>
            <person name="Bonch-Osmolovskaya E.A."/>
            <person name="Skryabin K.G."/>
        </authorList>
    </citation>
    <scope>NUCLEOTIDE SEQUENCE [LARGE SCALE GENOMIC DNA]</scope>
    <source>
        <strain>DSM 12597 / MM 739</strain>
    </source>
</reference>